<accession>A4VHL6</accession>
<dbReference type="EC" id="3.6.5.3" evidence="2"/>
<dbReference type="EMBL" id="CP000304">
    <property type="protein sequence ID" value="ABP78467.1"/>
    <property type="molecule type" value="Genomic_DNA"/>
</dbReference>
<dbReference type="RefSeq" id="WP_011911974.1">
    <property type="nucleotide sequence ID" value="NC_009434.1"/>
</dbReference>
<dbReference type="SMR" id="A4VHL6"/>
<dbReference type="KEGG" id="psa:PST_0769"/>
<dbReference type="eggNOG" id="COG0050">
    <property type="taxonomic scope" value="Bacteria"/>
</dbReference>
<dbReference type="HOGENOM" id="CLU_007265_0_2_6"/>
<dbReference type="Proteomes" id="UP000000233">
    <property type="component" value="Chromosome"/>
</dbReference>
<dbReference type="GO" id="GO:0005829">
    <property type="term" value="C:cytosol"/>
    <property type="evidence" value="ECO:0007669"/>
    <property type="project" value="TreeGrafter"/>
</dbReference>
<dbReference type="GO" id="GO:0005525">
    <property type="term" value="F:GTP binding"/>
    <property type="evidence" value="ECO:0007669"/>
    <property type="project" value="UniProtKB-UniRule"/>
</dbReference>
<dbReference type="GO" id="GO:0003924">
    <property type="term" value="F:GTPase activity"/>
    <property type="evidence" value="ECO:0007669"/>
    <property type="project" value="InterPro"/>
</dbReference>
<dbReference type="GO" id="GO:0097216">
    <property type="term" value="F:guanosine tetraphosphate binding"/>
    <property type="evidence" value="ECO:0007669"/>
    <property type="project" value="UniProtKB-ARBA"/>
</dbReference>
<dbReference type="GO" id="GO:0003746">
    <property type="term" value="F:translation elongation factor activity"/>
    <property type="evidence" value="ECO:0007669"/>
    <property type="project" value="UniProtKB-UniRule"/>
</dbReference>
<dbReference type="CDD" id="cd01884">
    <property type="entry name" value="EF_Tu"/>
    <property type="match status" value="1"/>
</dbReference>
<dbReference type="CDD" id="cd03697">
    <property type="entry name" value="EFTU_II"/>
    <property type="match status" value="1"/>
</dbReference>
<dbReference type="CDD" id="cd03707">
    <property type="entry name" value="EFTU_III"/>
    <property type="match status" value="1"/>
</dbReference>
<dbReference type="FunFam" id="2.40.30.10:FF:000001">
    <property type="entry name" value="Elongation factor Tu"/>
    <property type="match status" value="1"/>
</dbReference>
<dbReference type="FunFam" id="3.40.50.300:FF:000003">
    <property type="entry name" value="Elongation factor Tu"/>
    <property type="match status" value="1"/>
</dbReference>
<dbReference type="Gene3D" id="3.40.50.300">
    <property type="entry name" value="P-loop containing nucleotide triphosphate hydrolases"/>
    <property type="match status" value="1"/>
</dbReference>
<dbReference type="Gene3D" id="2.40.30.10">
    <property type="entry name" value="Translation factors"/>
    <property type="match status" value="2"/>
</dbReference>
<dbReference type="HAMAP" id="MF_00118_B">
    <property type="entry name" value="EF_Tu_B"/>
    <property type="match status" value="1"/>
</dbReference>
<dbReference type="InterPro" id="IPR041709">
    <property type="entry name" value="EF-Tu_GTP-bd"/>
</dbReference>
<dbReference type="InterPro" id="IPR050055">
    <property type="entry name" value="EF-Tu_GTPase"/>
</dbReference>
<dbReference type="InterPro" id="IPR004161">
    <property type="entry name" value="EFTu-like_2"/>
</dbReference>
<dbReference type="InterPro" id="IPR033720">
    <property type="entry name" value="EFTU_2"/>
</dbReference>
<dbReference type="InterPro" id="IPR031157">
    <property type="entry name" value="G_TR_CS"/>
</dbReference>
<dbReference type="InterPro" id="IPR027417">
    <property type="entry name" value="P-loop_NTPase"/>
</dbReference>
<dbReference type="InterPro" id="IPR005225">
    <property type="entry name" value="Small_GTP-bd"/>
</dbReference>
<dbReference type="InterPro" id="IPR000795">
    <property type="entry name" value="T_Tr_GTP-bd_dom"/>
</dbReference>
<dbReference type="InterPro" id="IPR009000">
    <property type="entry name" value="Transl_B-barrel_sf"/>
</dbReference>
<dbReference type="InterPro" id="IPR009001">
    <property type="entry name" value="Transl_elong_EF1A/Init_IF2_C"/>
</dbReference>
<dbReference type="InterPro" id="IPR004541">
    <property type="entry name" value="Transl_elong_EFTu/EF1A_bac/org"/>
</dbReference>
<dbReference type="InterPro" id="IPR004160">
    <property type="entry name" value="Transl_elong_EFTu/EF1A_C"/>
</dbReference>
<dbReference type="NCBIfam" id="TIGR00485">
    <property type="entry name" value="EF-Tu"/>
    <property type="match status" value="1"/>
</dbReference>
<dbReference type="NCBIfam" id="NF000766">
    <property type="entry name" value="PRK00049.1"/>
    <property type="match status" value="1"/>
</dbReference>
<dbReference type="NCBIfam" id="NF009372">
    <property type="entry name" value="PRK12735.1"/>
    <property type="match status" value="1"/>
</dbReference>
<dbReference type="NCBIfam" id="NF009373">
    <property type="entry name" value="PRK12736.1"/>
    <property type="match status" value="1"/>
</dbReference>
<dbReference type="NCBIfam" id="TIGR00231">
    <property type="entry name" value="small_GTP"/>
    <property type="match status" value="1"/>
</dbReference>
<dbReference type="PANTHER" id="PTHR43721:SF22">
    <property type="entry name" value="ELONGATION FACTOR TU, MITOCHONDRIAL"/>
    <property type="match status" value="1"/>
</dbReference>
<dbReference type="PANTHER" id="PTHR43721">
    <property type="entry name" value="ELONGATION FACTOR TU-RELATED"/>
    <property type="match status" value="1"/>
</dbReference>
<dbReference type="Pfam" id="PF00009">
    <property type="entry name" value="GTP_EFTU"/>
    <property type="match status" value="1"/>
</dbReference>
<dbReference type="Pfam" id="PF03144">
    <property type="entry name" value="GTP_EFTU_D2"/>
    <property type="match status" value="1"/>
</dbReference>
<dbReference type="Pfam" id="PF03143">
    <property type="entry name" value="GTP_EFTU_D3"/>
    <property type="match status" value="1"/>
</dbReference>
<dbReference type="PRINTS" id="PR00315">
    <property type="entry name" value="ELONGATNFCT"/>
</dbReference>
<dbReference type="SUPFAM" id="SSF50465">
    <property type="entry name" value="EF-Tu/eEF-1alpha/eIF2-gamma C-terminal domain"/>
    <property type="match status" value="1"/>
</dbReference>
<dbReference type="SUPFAM" id="SSF52540">
    <property type="entry name" value="P-loop containing nucleoside triphosphate hydrolases"/>
    <property type="match status" value="1"/>
</dbReference>
<dbReference type="SUPFAM" id="SSF50447">
    <property type="entry name" value="Translation proteins"/>
    <property type="match status" value="1"/>
</dbReference>
<dbReference type="PROSITE" id="PS00301">
    <property type="entry name" value="G_TR_1"/>
    <property type="match status" value="1"/>
</dbReference>
<dbReference type="PROSITE" id="PS51722">
    <property type="entry name" value="G_TR_2"/>
    <property type="match status" value="1"/>
</dbReference>
<keyword id="KW-0963">Cytoplasm</keyword>
<keyword id="KW-0251">Elongation factor</keyword>
<keyword id="KW-0342">GTP-binding</keyword>
<keyword id="KW-0378">Hydrolase</keyword>
<keyword id="KW-0460">Magnesium</keyword>
<keyword id="KW-0479">Metal-binding</keyword>
<keyword id="KW-0547">Nucleotide-binding</keyword>
<keyword id="KW-0648">Protein biosynthesis</keyword>
<keyword id="KW-1185">Reference proteome</keyword>
<organism>
    <name type="scientific">Stutzerimonas stutzeri (strain A1501)</name>
    <name type="common">Pseudomonas stutzeri</name>
    <dbReference type="NCBI Taxonomy" id="379731"/>
    <lineage>
        <taxon>Bacteria</taxon>
        <taxon>Pseudomonadati</taxon>
        <taxon>Pseudomonadota</taxon>
        <taxon>Gammaproteobacteria</taxon>
        <taxon>Pseudomonadales</taxon>
        <taxon>Pseudomonadaceae</taxon>
        <taxon>Stutzerimonas</taxon>
    </lineage>
</organism>
<reference key="1">
    <citation type="journal article" date="2008" name="Proc. Natl. Acad. Sci. U.S.A.">
        <title>Nitrogen fixation island and rhizosphere competence traits in the genome of root-associated Pseudomonas stutzeri A1501.</title>
        <authorList>
            <person name="Yan Y."/>
            <person name="Yang J."/>
            <person name="Dou Y."/>
            <person name="Chen M."/>
            <person name="Ping S."/>
            <person name="Peng J."/>
            <person name="Lu W."/>
            <person name="Zhang W."/>
            <person name="Yao Z."/>
            <person name="Li H."/>
            <person name="Liu W."/>
            <person name="He S."/>
            <person name="Geng L."/>
            <person name="Zhang X."/>
            <person name="Yang F."/>
            <person name="Yu H."/>
            <person name="Zhan Y."/>
            <person name="Li D."/>
            <person name="Lin Z."/>
            <person name="Wang Y."/>
            <person name="Elmerich C."/>
            <person name="Lin M."/>
            <person name="Jin Q."/>
        </authorList>
    </citation>
    <scope>NUCLEOTIDE SEQUENCE [LARGE SCALE GENOMIC DNA]</scope>
    <source>
        <strain>A1501</strain>
    </source>
</reference>
<evidence type="ECO:0000250" key="1"/>
<evidence type="ECO:0000255" key="2">
    <source>
        <dbReference type="HAMAP-Rule" id="MF_00118"/>
    </source>
</evidence>
<comment type="function">
    <text evidence="2">GTP hydrolase that promotes the GTP-dependent binding of aminoacyl-tRNA to the A-site of ribosomes during protein biosynthesis.</text>
</comment>
<comment type="catalytic activity">
    <reaction evidence="2">
        <text>GTP + H2O = GDP + phosphate + H(+)</text>
        <dbReference type="Rhea" id="RHEA:19669"/>
        <dbReference type="ChEBI" id="CHEBI:15377"/>
        <dbReference type="ChEBI" id="CHEBI:15378"/>
        <dbReference type="ChEBI" id="CHEBI:37565"/>
        <dbReference type="ChEBI" id="CHEBI:43474"/>
        <dbReference type="ChEBI" id="CHEBI:58189"/>
        <dbReference type="EC" id="3.6.5.3"/>
    </reaction>
    <physiologicalReaction direction="left-to-right" evidence="2">
        <dbReference type="Rhea" id="RHEA:19670"/>
    </physiologicalReaction>
</comment>
<comment type="subunit">
    <text evidence="2">Monomer.</text>
</comment>
<comment type="subcellular location">
    <subcellularLocation>
        <location evidence="2">Cytoplasm</location>
    </subcellularLocation>
</comment>
<comment type="similarity">
    <text evidence="2">Belongs to the TRAFAC class translation factor GTPase superfamily. Classic translation factor GTPase family. EF-Tu/EF-1A subfamily.</text>
</comment>
<feature type="chain" id="PRO_0000337477" description="Elongation factor Tu 1">
    <location>
        <begin position="1"/>
        <end position="397"/>
    </location>
</feature>
<feature type="domain" description="tr-type G">
    <location>
        <begin position="10"/>
        <end position="207"/>
    </location>
</feature>
<feature type="region of interest" description="G1" evidence="1">
    <location>
        <begin position="19"/>
        <end position="26"/>
    </location>
</feature>
<feature type="region of interest" description="G2" evidence="1">
    <location>
        <begin position="60"/>
        <end position="64"/>
    </location>
</feature>
<feature type="region of interest" description="G3" evidence="1">
    <location>
        <begin position="81"/>
        <end position="84"/>
    </location>
</feature>
<feature type="region of interest" description="G4" evidence="1">
    <location>
        <begin position="136"/>
        <end position="139"/>
    </location>
</feature>
<feature type="region of interest" description="G5" evidence="1">
    <location>
        <begin position="174"/>
        <end position="176"/>
    </location>
</feature>
<feature type="binding site" evidence="2">
    <location>
        <begin position="19"/>
        <end position="26"/>
    </location>
    <ligand>
        <name>GTP</name>
        <dbReference type="ChEBI" id="CHEBI:37565"/>
    </ligand>
</feature>
<feature type="binding site" evidence="2">
    <location>
        <position position="26"/>
    </location>
    <ligand>
        <name>Mg(2+)</name>
        <dbReference type="ChEBI" id="CHEBI:18420"/>
    </ligand>
</feature>
<feature type="binding site" evidence="2">
    <location>
        <begin position="81"/>
        <end position="85"/>
    </location>
    <ligand>
        <name>GTP</name>
        <dbReference type="ChEBI" id="CHEBI:37565"/>
    </ligand>
</feature>
<feature type="binding site" evidence="2">
    <location>
        <begin position="136"/>
        <end position="139"/>
    </location>
    <ligand>
        <name>GTP</name>
        <dbReference type="ChEBI" id="CHEBI:37565"/>
    </ligand>
</feature>
<proteinExistence type="inferred from homology"/>
<sequence length="397" mass="43446">MAKEKFERNKPHVNVGTIGHVDHGKTTLTAALTRVCSEVFGSARVDFDKIDSAPEEKARGITINTAHVEYDSNVRHYAHVDCPGHADYVKNMITGAAQMDGAILVCSAADGPMPQTREHILLSRQVGVPYIVVFLNKADMVDDAELLELVEMEVRDLLSTYDFPGDDTPIIIGSALMALNGEDDNGLGTTAVKKLVETLDSYIPEPVRAIDKPFLMPIEDVFSISGRGTVVTGRVERGIVKVQEEIEIVGLRPTTKTTCTGVEMFRKLLDEGRAGENCGVLLRGTKRDEVERGQVLAKPGTIKPHTKFEAEVYVLSKEEGGRHTPFFKGYRPQFYFRTTDVTGSCELPEGVEMVMPGDNVKMVVTLIKPIAMEDGLRFAIREGGRTVGAGVVAKIVE</sequence>
<name>EFTU1_STUS1</name>
<protein>
    <recommendedName>
        <fullName evidence="2">Elongation factor Tu 1</fullName>
        <shortName evidence="2">EF-Tu 1</shortName>
        <ecNumber evidence="2">3.6.5.3</ecNumber>
    </recommendedName>
</protein>
<gene>
    <name evidence="2" type="primary">tuf1</name>
    <name type="ordered locus">PST_0769</name>
</gene>